<accession>Q30TK8</accession>
<proteinExistence type="inferred from homology"/>
<reference key="1">
    <citation type="journal article" date="2008" name="Appl. Environ. Microbiol.">
        <title>Genome of the epsilonproteobacterial chemolithoautotroph Sulfurimonas denitrificans.</title>
        <authorList>
            <person name="Sievert S.M."/>
            <person name="Scott K.M."/>
            <person name="Klotz M.G."/>
            <person name="Chain P.S.G."/>
            <person name="Hauser L.J."/>
            <person name="Hemp J."/>
            <person name="Huegler M."/>
            <person name="Land M."/>
            <person name="Lapidus A."/>
            <person name="Larimer F.W."/>
            <person name="Lucas S."/>
            <person name="Malfatti S.A."/>
            <person name="Meyer F."/>
            <person name="Paulsen I.T."/>
            <person name="Ren Q."/>
            <person name="Simon J."/>
            <person name="Bailey K."/>
            <person name="Diaz E."/>
            <person name="Fitzpatrick K.A."/>
            <person name="Glover B."/>
            <person name="Gwatney N."/>
            <person name="Korajkic A."/>
            <person name="Long A."/>
            <person name="Mobberley J.M."/>
            <person name="Pantry S.N."/>
            <person name="Pazder G."/>
            <person name="Peterson S."/>
            <person name="Quintanilla J.D."/>
            <person name="Sprinkle R."/>
            <person name="Stephens J."/>
            <person name="Thomas P."/>
            <person name="Vaughn R."/>
            <person name="Weber M.J."/>
            <person name="Wooten L.L."/>
        </authorList>
    </citation>
    <scope>NUCLEOTIDE SEQUENCE [LARGE SCALE GENOMIC DNA]</scope>
    <source>
        <strain>ATCC 33889 / DSM 1251</strain>
    </source>
</reference>
<comment type="function">
    <text evidence="1">GTPase that plays an essential role in the late steps of ribosome biogenesis.</text>
</comment>
<comment type="subunit">
    <text evidence="1">Associates with the 50S ribosomal subunit.</text>
</comment>
<comment type="similarity">
    <text evidence="1">Belongs to the TRAFAC class TrmE-Era-EngA-EngB-Septin-like GTPase superfamily. EngA (Der) GTPase family.</text>
</comment>
<dbReference type="EMBL" id="CP000153">
    <property type="protein sequence ID" value="ABB43673.1"/>
    <property type="molecule type" value="Genomic_DNA"/>
</dbReference>
<dbReference type="RefSeq" id="WP_011372027.1">
    <property type="nucleotide sequence ID" value="NC_007575.1"/>
</dbReference>
<dbReference type="SMR" id="Q30TK8"/>
<dbReference type="STRING" id="326298.Suden_0392"/>
<dbReference type="KEGG" id="tdn:Suden_0392"/>
<dbReference type="eggNOG" id="COG1160">
    <property type="taxonomic scope" value="Bacteria"/>
</dbReference>
<dbReference type="HOGENOM" id="CLU_016077_6_2_7"/>
<dbReference type="OrthoDB" id="9805918at2"/>
<dbReference type="Proteomes" id="UP000002714">
    <property type="component" value="Chromosome"/>
</dbReference>
<dbReference type="GO" id="GO:0005525">
    <property type="term" value="F:GTP binding"/>
    <property type="evidence" value="ECO:0007669"/>
    <property type="project" value="UniProtKB-UniRule"/>
</dbReference>
<dbReference type="GO" id="GO:0043022">
    <property type="term" value="F:ribosome binding"/>
    <property type="evidence" value="ECO:0007669"/>
    <property type="project" value="TreeGrafter"/>
</dbReference>
<dbReference type="GO" id="GO:0042254">
    <property type="term" value="P:ribosome biogenesis"/>
    <property type="evidence" value="ECO:0007669"/>
    <property type="project" value="UniProtKB-KW"/>
</dbReference>
<dbReference type="CDD" id="cd01894">
    <property type="entry name" value="EngA1"/>
    <property type="match status" value="1"/>
</dbReference>
<dbReference type="CDD" id="cd01895">
    <property type="entry name" value="EngA2"/>
    <property type="match status" value="1"/>
</dbReference>
<dbReference type="FunFam" id="3.30.300.20:FF:000004">
    <property type="entry name" value="GTPase Der"/>
    <property type="match status" value="1"/>
</dbReference>
<dbReference type="FunFam" id="3.40.50.300:FF:000494">
    <property type="entry name" value="tRNA modification GTPase MnmE"/>
    <property type="match status" value="1"/>
</dbReference>
<dbReference type="Gene3D" id="3.30.300.20">
    <property type="match status" value="1"/>
</dbReference>
<dbReference type="Gene3D" id="3.40.50.300">
    <property type="entry name" value="P-loop containing nucleotide triphosphate hydrolases"/>
    <property type="match status" value="2"/>
</dbReference>
<dbReference type="HAMAP" id="MF_00195">
    <property type="entry name" value="GTPase_Der"/>
    <property type="match status" value="1"/>
</dbReference>
<dbReference type="InterPro" id="IPR031166">
    <property type="entry name" value="G_ENGA"/>
</dbReference>
<dbReference type="InterPro" id="IPR006073">
    <property type="entry name" value="GTP-bd"/>
</dbReference>
<dbReference type="InterPro" id="IPR016484">
    <property type="entry name" value="GTPase_Der"/>
</dbReference>
<dbReference type="InterPro" id="IPR032859">
    <property type="entry name" value="KH_dom-like"/>
</dbReference>
<dbReference type="InterPro" id="IPR015946">
    <property type="entry name" value="KH_dom-like_a/b"/>
</dbReference>
<dbReference type="InterPro" id="IPR027417">
    <property type="entry name" value="P-loop_NTPase"/>
</dbReference>
<dbReference type="InterPro" id="IPR005225">
    <property type="entry name" value="Small_GTP-bd"/>
</dbReference>
<dbReference type="NCBIfam" id="TIGR03594">
    <property type="entry name" value="GTPase_EngA"/>
    <property type="match status" value="1"/>
</dbReference>
<dbReference type="NCBIfam" id="TIGR00231">
    <property type="entry name" value="small_GTP"/>
    <property type="match status" value="2"/>
</dbReference>
<dbReference type="PANTHER" id="PTHR43834">
    <property type="entry name" value="GTPASE DER"/>
    <property type="match status" value="1"/>
</dbReference>
<dbReference type="PANTHER" id="PTHR43834:SF6">
    <property type="entry name" value="GTPASE DER"/>
    <property type="match status" value="1"/>
</dbReference>
<dbReference type="Pfam" id="PF14714">
    <property type="entry name" value="KH_dom-like"/>
    <property type="match status" value="1"/>
</dbReference>
<dbReference type="Pfam" id="PF01926">
    <property type="entry name" value="MMR_HSR1"/>
    <property type="match status" value="2"/>
</dbReference>
<dbReference type="PIRSF" id="PIRSF006485">
    <property type="entry name" value="GTP-binding_EngA"/>
    <property type="match status" value="1"/>
</dbReference>
<dbReference type="PRINTS" id="PR00326">
    <property type="entry name" value="GTP1OBG"/>
</dbReference>
<dbReference type="SUPFAM" id="SSF52540">
    <property type="entry name" value="P-loop containing nucleoside triphosphate hydrolases"/>
    <property type="match status" value="2"/>
</dbReference>
<dbReference type="PROSITE" id="PS51712">
    <property type="entry name" value="G_ENGA"/>
    <property type="match status" value="2"/>
</dbReference>
<keyword id="KW-0342">GTP-binding</keyword>
<keyword id="KW-0547">Nucleotide-binding</keyword>
<keyword id="KW-1185">Reference proteome</keyword>
<keyword id="KW-0677">Repeat</keyword>
<keyword id="KW-0690">Ribosome biogenesis</keyword>
<organism>
    <name type="scientific">Sulfurimonas denitrificans (strain ATCC 33889 / DSM 1251)</name>
    <name type="common">Thiomicrospira denitrificans (strain ATCC 33889 / DSM 1251)</name>
    <dbReference type="NCBI Taxonomy" id="326298"/>
    <lineage>
        <taxon>Bacteria</taxon>
        <taxon>Pseudomonadati</taxon>
        <taxon>Campylobacterota</taxon>
        <taxon>Epsilonproteobacteria</taxon>
        <taxon>Campylobacterales</taxon>
        <taxon>Sulfurimonadaceae</taxon>
        <taxon>Sulfurimonas</taxon>
    </lineage>
</organism>
<feature type="chain" id="PRO_1000011777" description="GTPase Der">
    <location>
        <begin position="1"/>
        <end position="494"/>
    </location>
</feature>
<feature type="domain" description="EngA-type G 1">
    <location>
        <begin position="2"/>
        <end position="164"/>
    </location>
</feature>
<feature type="domain" description="EngA-type G 2">
    <location>
        <begin position="235"/>
        <end position="407"/>
    </location>
</feature>
<feature type="domain" description="KH-like" evidence="1">
    <location>
        <begin position="408"/>
        <end position="492"/>
    </location>
</feature>
<feature type="binding site" evidence="1">
    <location>
        <begin position="8"/>
        <end position="15"/>
    </location>
    <ligand>
        <name>GTP</name>
        <dbReference type="ChEBI" id="CHEBI:37565"/>
        <label>1</label>
    </ligand>
</feature>
<feature type="binding site" evidence="1">
    <location>
        <begin position="55"/>
        <end position="59"/>
    </location>
    <ligand>
        <name>GTP</name>
        <dbReference type="ChEBI" id="CHEBI:37565"/>
        <label>1</label>
    </ligand>
</feature>
<feature type="binding site" evidence="1">
    <location>
        <begin position="116"/>
        <end position="119"/>
    </location>
    <ligand>
        <name>GTP</name>
        <dbReference type="ChEBI" id="CHEBI:37565"/>
        <label>1</label>
    </ligand>
</feature>
<feature type="binding site" evidence="1">
    <location>
        <begin position="241"/>
        <end position="248"/>
    </location>
    <ligand>
        <name>GTP</name>
        <dbReference type="ChEBI" id="CHEBI:37565"/>
        <label>2</label>
    </ligand>
</feature>
<feature type="binding site" evidence="1">
    <location>
        <begin position="288"/>
        <end position="292"/>
    </location>
    <ligand>
        <name>GTP</name>
        <dbReference type="ChEBI" id="CHEBI:37565"/>
        <label>2</label>
    </ligand>
</feature>
<feature type="binding site" evidence="1">
    <location>
        <begin position="352"/>
        <end position="355"/>
    </location>
    <ligand>
        <name>GTP</name>
        <dbReference type="ChEBI" id="CHEBI:37565"/>
        <label>2</label>
    </ligand>
</feature>
<evidence type="ECO:0000255" key="1">
    <source>
        <dbReference type="HAMAP-Rule" id="MF_00195"/>
    </source>
</evidence>
<protein>
    <recommendedName>
        <fullName evidence="1">GTPase Der</fullName>
    </recommendedName>
    <alternativeName>
        <fullName evidence="1">GTP-binding protein EngA</fullName>
    </alternativeName>
</protein>
<sequence length="494" mass="56999">MKKIAIIGRPNVGKSSLFNRLMKKRDAITSDVAGTTRDVKRRHVVIINKEALLLDTGGLDQGCELFDKIKEKSLEAAKKADIILYMVDGKSIPEDADKKLFYELQTLGKEVALVVNKIDNDKLKDNLWDFYEFGTDAIFGISVSHNRSVNALLEWIYDRLPEEDIIKDEDEEDDVNIVEEDDEEFEFDDKEYNEEEEDDNFFYPEDDEDEEFEDDSIFAQNDRIKEFDETDANHIKISIIGRTNVGKSSLLNALLGEERSVVSSVAGTTIDPIDESMEYKDKQLTFVDTAGLRRRGKIVGIEKFALMRTKEMLENSNMALVVLDASEPFLDLDEKIAGLVDSNRLACIIVLNKWDIANRDEYDKIIQEVRDRFKFLAYAPIVTLSAKSHRRVDKLFDMILEIDKNYSQHIKTSELNVVLEKALRRHQLPSMRGQIIRIYYATQYETRPPKIAIVMNKPRGLHFTYRRYLTNKLREAFSFSGTPVLFKAKKRGEK</sequence>
<gene>
    <name evidence="1" type="primary">der</name>
    <name type="synonym">engA</name>
    <name type="ordered locus">Suden_0392</name>
</gene>
<name>DER_SULDN</name>